<organism>
    <name type="scientific">Verminephrobacter eiseniae (strain EF01-2)</name>
    <dbReference type="NCBI Taxonomy" id="391735"/>
    <lineage>
        <taxon>Bacteria</taxon>
        <taxon>Pseudomonadati</taxon>
        <taxon>Pseudomonadota</taxon>
        <taxon>Betaproteobacteria</taxon>
        <taxon>Burkholderiales</taxon>
        <taxon>Comamonadaceae</taxon>
        <taxon>Verminephrobacter</taxon>
    </lineage>
</organism>
<sequence length="622" mass="65716">MALLQISEPGQSPHPHQRRIAVGIDLGTTHSLVAAVRNGVSECLPDAQGRVLLPSVVRYLDQGGRQIGHEAVAAQVWDARNTIASVKRFMGRSLKDVARAGQLPYDFVPDAAAQGMLSLATVAGNKSPVEVSAEILAALRQRAEDSFNADLYGAVITVPAYFDDAQRQATKDAARLAGIPLLRLINEPTAAAIAYGLDNASEGIYAVYDLGGGTFDISILRLAQGVFEVIATGGDSALGGDDYDAALVDWVLQQARRQASTPADRAALRIAARACKQALSATDIAAFSADISCANVHVDVRRADFEAITADLTARSMAAVRRALRDAQLTRDQVQGVVLVGGATRMPQVQRAVAQFFGQPPLTNLNPDEVVALGAAIQAHQLAGNGGNAAELLLLDVIPLSLGVETMGGLVERIVARNEPIPTAKAQDFTTYKDGQTALAIHVVQGERDLVQDCRSLARFELRGIPPMVAGAARIRVTFAIDADGLLSVSAKEQGSGAQAHIDVKPSYGLSDEQIARMLQDSFATAAQDMKTRALVEARVDAERMLSATQSALAADGEMLSARERAAIEALMATLSAQREADDAAVIEAATEALAQGTQAFAARRMNRGIRQALAGRNVQTL</sequence>
<evidence type="ECO:0000255" key="1">
    <source>
        <dbReference type="HAMAP-Rule" id="MF_00679"/>
    </source>
</evidence>
<protein>
    <recommendedName>
        <fullName evidence="1">Chaperone protein HscA homolog</fullName>
    </recommendedName>
</protein>
<feature type="chain" id="PRO_1000044900" description="Chaperone protein HscA homolog">
    <location>
        <begin position="1"/>
        <end position="622"/>
    </location>
</feature>
<name>HSCA_VEREI</name>
<reference key="1">
    <citation type="submission" date="2006-12" db="EMBL/GenBank/DDBJ databases">
        <title>Complete sequence of chromosome 1 of Verminephrobacter eiseniae EF01-2.</title>
        <authorList>
            <person name="Copeland A."/>
            <person name="Lucas S."/>
            <person name="Lapidus A."/>
            <person name="Barry K."/>
            <person name="Detter J.C."/>
            <person name="Glavina del Rio T."/>
            <person name="Dalin E."/>
            <person name="Tice H."/>
            <person name="Pitluck S."/>
            <person name="Chertkov O."/>
            <person name="Brettin T."/>
            <person name="Bruce D."/>
            <person name="Han C."/>
            <person name="Tapia R."/>
            <person name="Gilna P."/>
            <person name="Schmutz J."/>
            <person name="Larimer F."/>
            <person name="Land M."/>
            <person name="Hauser L."/>
            <person name="Kyrpides N."/>
            <person name="Kim E."/>
            <person name="Stahl D."/>
            <person name="Richardson P."/>
        </authorList>
    </citation>
    <scope>NUCLEOTIDE SEQUENCE [LARGE SCALE GENOMIC DNA]</scope>
    <source>
        <strain>EF01-2</strain>
    </source>
</reference>
<accession>A1WKG6</accession>
<comment type="function">
    <text evidence="1">Chaperone involved in the maturation of iron-sulfur cluster-containing proteins. Has a low intrinsic ATPase activity which is markedly stimulated by HscB.</text>
</comment>
<comment type="similarity">
    <text evidence="1">Belongs to the heat shock protein 70 family.</text>
</comment>
<proteinExistence type="inferred from homology"/>
<gene>
    <name evidence="1" type="primary">hscA</name>
    <name type="ordered locus">Veis_2377</name>
</gene>
<dbReference type="EMBL" id="CP000542">
    <property type="protein sequence ID" value="ABM58123.1"/>
    <property type="molecule type" value="Genomic_DNA"/>
</dbReference>
<dbReference type="RefSeq" id="WP_011810126.1">
    <property type="nucleotide sequence ID" value="NC_008786.1"/>
</dbReference>
<dbReference type="SMR" id="A1WKG6"/>
<dbReference type="STRING" id="391735.Veis_2377"/>
<dbReference type="GeneID" id="76460939"/>
<dbReference type="KEGG" id="vei:Veis_2377"/>
<dbReference type="eggNOG" id="COG0443">
    <property type="taxonomic scope" value="Bacteria"/>
</dbReference>
<dbReference type="HOGENOM" id="CLU_005965_2_1_4"/>
<dbReference type="OrthoDB" id="9766019at2"/>
<dbReference type="Proteomes" id="UP000000374">
    <property type="component" value="Chromosome"/>
</dbReference>
<dbReference type="GO" id="GO:0005524">
    <property type="term" value="F:ATP binding"/>
    <property type="evidence" value="ECO:0007669"/>
    <property type="project" value="UniProtKB-KW"/>
</dbReference>
<dbReference type="GO" id="GO:0016887">
    <property type="term" value="F:ATP hydrolysis activity"/>
    <property type="evidence" value="ECO:0007669"/>
    <property type="project" value="UniProtKB-UniRule"/>
</dbReference>
<dbReference type="GO" id="GO:0140662">
    <property type="term" value="F:ATP-dependent protein folding chaperone"/>
    <property type="evidence" value="ECO:0007669"/>
    <property type="project" value="InterPro"/>
</dbReference>
<dbReference type="GO" id="GO:0051082">
    <property type="term" value="F:unfolded protein binding"/>
    <property type="evidence" value="ECO:0007669"/>
    <property type="project" value="InterPro"/>
</dbReference>
<dbReference type="GO" id="GO:0016226">
    <property type="term" value="P:iron-sulfur cluster assembly"/>
    <property type="evidence" value="ECO:0007669"/>
    <property type="project" value="InterPro"/>
</dbReference>
<dbReference type="FunFam" id="3.30.420.40:FF:000046">
    <property type="entry name" value="Chaperone protein HscA"/>
    <property type="match status" value="1"/>
</dbReference>
<dbReference type="FunFam" id="2.60.34.10:FF:000005">
    <property type="entry name" value="Chaperone protein HscA homolog"/>
    <property type="match status" value="1"/>
</dbReference>
<dbReference type="Gene3D" id="1.20.1270.10">
    <property type="match status" value="1"/>
</dbReference>
<dbReference type="Gene3D" id="3.30.420.40">
    <property type="match status" value="2"/>
</dbReference>
<dbReference type="Gene3D" id="3.90.640.10">
    <property type="entry name" value="Actin, Chain A, domain 4"/>
    <property type="match status" value="1"/>
</dbReference>
<dbReference type="Gene3D" id="2.60.34.10">
    <property type="entry name" value="Substrate Binding Domain Of DNAk, Chain A, domain 1"/>
    <property type="match status" value="1"/>
</dbReference>
<dbReference type="HAMAP" id="MF_00679">
    <property type="entry name" value="HscA"/>
    <property type="match status" value="1"/>
</dbReference>
<dbReference type="InterPro" id="IPR043129">
    <property type="entry name" value="ATPase_NBD"/>
</dbReference>
<dbReference type="InterPro" id="IPR018181">
    <property type="entry name" value="Heat_shock_70_CS"/>
</dbReference>
<dbReference type="InterPro" id="IPR029048">
    <property type="entry name" value="HSP70_C_sf"/>
</dbReference>
<dbReference type="InterPro" id="IPR029047">
    <property type="entry name" value="HSP70_peptide-bd_sf"/>
</dbReference>
<dbReference type="InterPro" id="IPR013126">
    <property type="entry name" value="Hsp_70_fam"/>
</dbReference>
<dbReference type="InterPro" id="IPR010236">
    <property type="entry name" value="ISC_FeS_clus_asmbl_HscA"/>
</dbReference>
<dbReference type="NCBIfam" id="TIGR01991">
    <property type="entry name" value="HscA"/>
    <property type="match status" value="1"/>
</dbReference>
<dbReference type="NCBIfam" id="NF003520">
    <property type="entry name" value="PRK05183.1"/>
    <property type="match status" value="1"/>
</dbReference>
<dbReference type="PANTHER" id="PTHR19375">
    <property type="entry name" value="HEAT SHOCK PROTEIN 70KDA"/>
    <property type="match status" value="1"/>
</dbReference>
<dbReference type="Pfam" id="PF00012">
    <property type="entry name" value="HSP70"/>
    <property type="match status" value="1"/>
</dbReference>
<dbReference type="PRINTS" id="PR00301">
    <property type="entry name" value="HEATSHOCK70"/>
</dbReference>
<dbReference type="SUPFAM" id="SSF53067">
    <property type="entry name" value="Actin-like ATPase domain"/>
    <property type="match status" value="2"/>
</dbReference>
<dbReference type="SUPFAM" id="SSF100934">
    <property type="entry name" value="Heat shock protein 70kD (HSP70), C-terminal subdomain"/>
    <property type="match status" value="1"/>
</dbReference>
<dbReference type="SUPFAM" id="SSF100920">
    <property type="entry name" value="Heat shock protein 70kD (HSP70), peptide-binding domain"/>
    <property type="match status" value="1"/>
</dbReference>
<dbReference type="PROSITE" id="PS00297">
    <property type="entry name" value="HSP70_1"/>
    <property type="match status" value="1"/>
</dbReference>
<dbReference type="PROSITE" id="PS00329">
    <property type="entry name" value="HSP70_2"/>
    <property type="match status" value="1"/>
</dbReference>
<dbReference type="PROSITE" id="PS01036">
    <property type="entry name" value="HSP70_3"/>
    <property type="match status" value="1"/>
</dbReference>
<keyword id="KW-0067">ATP-binding</keyword>
<keyword id="KW-0143">Chaperone</keyword>
<keyword id="KW-0547">Nucleotide-binding</keyword>
<keyword id="KW-1185">Reference proteome</keyword>